<organism>
    <name type="scientific">Streptococcus pyogenes serotype M3 (strain SSI-1)</name>
    <dbReference type="NCBI Taxonomy" id="193567"/>
    <lineage>
        <taxon>Bacteria</taxon>
        <taxon>Bacillati</taxon>
        <taxon>Bacillota</taxon>
        <taxon>Bacilli</taxon>
        <taxon>Lactobacillales</taxon>
        <taxon>Streptococcaceae</taxon>
        <taxon>Streptococcus</taxon>
    </lineage>
</organism>
<name>HASC2_STRPQ</name>
<comment type="catalytic activity">
    <reaction>
        <text>alpha-D-glucose 1-phosphate + UTP + H(+) = UDP-alpha-D-glucose + diphosphate</text>
        <dbReference type="Rhea" id="RHEA:19889"/>
        <dbReference type="ChEBI" id="CHEBI:15378"/>
        <dbReference type="ChEBI" id="CHEBI:33019"/>
        <dbReference type="ChEBI" id="CHEBI:46398"/>
        <dbReference type="ChEBI" id="CHEBI:58601"/>
        <dbReference type="ChEBI" id="CHEBI:58885"/>
        <dbReference type="EC" id="2.7.7.9"/>
    </reaction>
</comment>
<comment type="pathway">
    <text>Carbohydrate metabolism; nucleotide-sugar metabolism.</text>
</comment>
<comment type="similarity">
    <text evidence="1">Belongs to the UDPGP type 2 family.</text>
</comment>
<comment type="sequence caution" evidence="1">
    <conflict type="erroneous initiation">
        <sequence resource="EMBL-CDS" id="BAC63261"/>
    </conflict>
</comment>
<reference key="1">
    <citation type="journal article" date="2003" name="Genome Res.">
        <title>Genome sequence of an M3 strain of Streptococcus pyogenes reveals a large-scale genomic rearrangement in invasive strains and new insights into phage evolution.</title>
        <authorList>
            <person name="Nakagawa I."/>
            <person name="Kurokawa K."/>
            <person name="Yamashita A."/>
            <person name="Nakata M."/>
            <person name="Tomiyasu Y."/>
            <person name="Okahashi N."/>
            <person name="Kawabata S."/>
            <person name="Yamazaki K."/>
            <person name="Shiba T."/>
            <person name="Yasunaga T."/>
            <person name="Hayashi H."/>
            <person name="Hattori M."/>
            <person name="Hamada S."/>
        </authorList>
    </citation>
    <scope>NUCLEOTIDE SEQUENCE [LARGE SCALE GENOMIC DNA]</scope>
    <source>
        <strain>SSI-1</strain>
    </source>
</reference>
<protein>
    <recommendedName>
        <fullName>UTP--glucose-1-phosphate uridylyltransferase 2</fullName>
        <ecNumber>2.7.7.9</ecNumber>
    </recommendedName>
    <alternativeName>
        <fullName>Alpha-D-glucosyl-1-phosphate uridylyltransferase 2</fullName>
    </alternativeName>
    <alternativeName>
        <fullName>UDP-glucose pyrophosphorylase 2</fullName>
        <shortName>UDPGP 2</shortName>
    </alternativeName>
    <alternativeName>
        <fullName>Uridine diphosphoglucose pyrophosphorylase 2</fullName>
    </alternativeName>
</protein>
<dbReference type="EC" id="2.7.7.9"/>
<dbReference type="EMBL" id="BA000034">
    <property type="protein sequence ID" value="BAC63261.1"/>
    <property type="status" value="ALT_INIT"/>
    <property type="molecule type" value="Genomic_DNA"/>
</dbReference>
<dbReference type="SMR" id="P0DG73"/>
<dbReference type="KEGG" id="sps:SPs0166"/>
<dbReference type="HOGENOM" id="CLU_029499_1_2_9"/>
<dbReference type="UniPathway" id="UPA00215"/>
<dbReference type="GO" id="GO:0003983">
    <property type="term" value="F:UTP:glucose-1-phosphate uridylyltransferase activity"/>
    <property type="evidence" value="ECO:0007669"/>
    <property type="project" value="UniProtKB-EC"/>
</dbReference>
<dbReference type="GO" id="GO:0009058">
    <property type="term" value="P:biosynthetic process"/>
    <property type="evidence" value="ECO:0007669"/>
    <property type="project" value="InterPro"/>
</dbReference>
<dbReference type="GO" id="GO:0006011">
    <property type="term" value="P:UDP-alpha-D-glucose metabolic process"/>
    <property type="evidence" value="ECO:0007669"/>
    <property type="project" value="InterPro"/>
</dbReference>
<dbReference type="CDD" id="cd02541">
    <property type="entry name" value="UGPase_prokaryotic"/>
    <property type="match status" value="1"/>
</dbReference>
<dbReference type="Gene3D" id="3.90.550.10">
    <property type="entry name" value="Spore Coat Polysaccharide Biosynthesis Protein SpsA, Chain A"/>
    <property type="match status" value="1"/>
</dbReference>
<dbReference type="InterPro" id="IPR005771">
    <property type="entry name" value="GalU_uridylyltTrfase_bac/arc"/>
</dbReference>
<dbReference type="InterPro" id="IPR005835">
    <property type="entry name" value="NTP_transferase_dom"/>
</dbReference>
<dbReference type="InterPro" id="IPR029044">
    <property type="entry name" value="Nucleotide-diphossugar_trans"/>
</dbReference>
<dbReference type="NCBIfam" id="TIGR01099">
    <property type="entry name" value="galU"/>
    <property type="match status" value="1"/>
</dbReference>
<dbReference type="PANTHER" id="PTHR43197">
    <property type="entry name" value="UTP--GLUCOSE-1-PHOSPHATE URIDYLYLTRANSFERASE"/>
    <property type="match status" value="1"/>
</dbReference>
<dbReference type="PANTHER" id="PTHR43197:SF1">
    <property type="entry name" value="UTP--GLUCOSE-1-PHOSPHATE URIDYLYLTRANSFERASE"/>
    <property type="match status" value="1"/>
</dbReference>
<dbReference type="Pfam" id="PF00483">
    <property type="entry name" value="NTP_transferase"/>
    <property type="match status" value="1"/>
</dbReference>
<dbReference type="SUPFAM" id="SSF53448">
    <property type="entry name" value="Nucleotide-diphospho-sugar transferases"/>
    <property type="match status" value="1"/>
</dbReference>
<sequence length="299" mass="33302">MTKVRKAIIPAAGLGTRFLPATKALAKEMLPIVDKPTIQFIVEEALKSGIEEILIVTGKSKRSIEDHFDSNFELEYNLQAKGKIELLKLVDETTSINLHFIRQSHPRGLGDAVLQAKTFVGNEPFVVMLGDDLMDITNPNVKPLTKQLIDDYEETHAATIAVMRVPHEDVSNYGIIAPQAKAVKGLYSVDTFVEKPQPQDAPSDLAIIGRYLLTPEIFSILEKQEPGAGNEVQLTDAIDTLNKTQRVFAREFKGKRYDVGDKFGFMKTSLDYALKHPQVKDDLKAYIIQLGKALEKTKP</sequence>
<evidence type="ECO:0000305" key="1"/>
<gene>
    <name type="primary">hasC2</name>
    <name type="synonym">hasC.2</name>
    <name type="ordered locus">SPs0166</name>
</gene>
<proteinExistence type="inferred from homology"/>
<accession>P0DG73</accession>
<accession>P58098</accession>
<accession>P67069</accession>
<feature type="chain" id="PRO_0000411626" description="UTP--glucose-1-phosphate uridylyltransferase 2">
    <location>
        <begin position="1"/>
        <end position="299"/>
    </location>
</feature>
<keyword id="KW-0548">Nucleotidyltransferase</keyword>
<keyword id="KW-0808">Transferase</keyword>